<reference evidence="7" key="1">
    <citation type="journal article" date="2005" name="Nature">
        <title>Genome sequence, comparative analysis and haplotype structure of the domestic dog.</title>
        <authorList>
            <person name="Lindblad-Toh K."/>
            <person name="Wade C.M."/>
            <person name="Mikkelsen T.S."/>
            <person name="Karlsson E.K."/>
            <person name="Jaffe D.B."/>
            <person name="Kamal M."/>
            <person name="Clamp M."/>
            <person name="Chang J.L."/>
            <person name="Kulbokas E.J. III"/>
            <person name="Zody M.C."/>
            <person name="Mauceli E."/>
            <person name="Xie X."/>
            <person name="Breen M."/>
            <person name="Wayne R.K."/>
            <person name="Ostrander E.A."/>
            <person name="Ponting C.P."/>
            <person name="Galibert F."/>
            <person name="Smith D.R."/>
            <person name="deJong P.J."/>
            <person name="Kirkness E.F."/>
            <person name="Alvarez P."/>
            <person name="Biagi T."/>
            <person name="Brockman W."/>
            <person name="Butler J."/>
            <person name="Chin C.-W."/>
            <person name="Cook A."/>
            <person name="Cuff J."/>
            <person name="Daly M.J."/>
            <person name="DeCaprio D."/>
            <person name="Gnerre S."/>
            <person name="Grabherr M."/>
            <person name="Kellis M."/>
            <person name="Kleber M."/>
            <person name="Bardeleben C."/>
            <person name="Goodstadt L."/>
            <person name="Heger A."/>
            <person name="Hitte C."/>
            <person name="Kim L."/>
            <person name="Koepfli K.-P."/>
            <person name="Parker H.G."/>
            <person name="Pollinger J.P."/>
            <person name="Searle S.M.J."/>
            <person name="Sutter N.B."/>
            <person name="Thomas R."/>
            <person name="Webber C."/>
            <person name="Baldwin J."/>
            <person name="Abebe A."/>
            <person name="Abouelleil A."/>
            <person name="Aftuck L."/>
            <person name="Ait-Zahra M."/>
            <person name="Aldredge T."/>
            <person name="Allen N."/>
            <person name="An P."/>
            <person name="Anderson S."/>
            <person name="Antoine C."/>
            <person name="Arachchi H."/>
            <person name="Aslam A."/>
            <person name="Ayotte L."/>
            <person name="Bachantsang P."/>
            <person name="Barry A."/>
            <person name="Bayul T."/>
            <person name="Benamara M."/>
            <person name="Berlin A."/>
            <person name="Bessette D."/>
            <person name="Blitshteyn B."/>
            <person name="Bloom T."/>
            <person name="Blye J."/>
            <person name="Boguslavskiy L."/>
            <person name="Bonnet C."/>
            <person name="Boukhgalter B."/>
            <person name="Brown A."/>
            <person name="Cahill P."/>
            <person name="Calixte N."/>
            <person name="Camarata J."/>
            <person name="Cheshatsang Y."/>
            <person name="Chu J."/>
            <person name="Citroen M."/>
            <person name="Collymore A."/>
            <person name="Cooke P."/>
            <person name="Dawoe T."/>
            <person name="Daza R."/>
            <person name="Decktor K."/>
            <person name="DeGray S."/>
            <person name="Dhargay N."/>
            <person name="Dooley K."/>
            <person name="Dooley K."/>
            <person name="Dorje P."/>
            <person name="Dorjee K."/>
            <person name="Dorris L."/>
            <person name="Duffey N."/>
            <person name="Dupes A."/>
            <person name="Egbiremolen O."/>
            <person name="Elong R."/>
            <person name="Falk J."/>
            <person name="Farina A."/>
            <person name="Faro S."/>
            <person name="Ferguson D."/>
            <person name="Ferreira P."/>
            <person name="Fisher S."/>
            <person name="FitzGerald M."/>
            <person name="Foley K."/>
            <person name="Foley C."/>
            <person name="Franke A."/>
            <person name="Friedrich D."/>
            <person name="Gage D."/>
            <person name="Garber M."/>
            <person name="Gearin G."/>
            <person name="Giannoukos G."/>
            <person name="Goode T."/>
            <person name="Goyette A."/>
            <person name="Graham J."/>
            <person name="Grandbois E."/>
            <person name="Gyaltsen K."/>
            <person name="Hafez N."/>
            <person name="Hagopian D."/>
            <person name="Hagos B."/>
            <person name="Hall J."/>
            <person name="Healy C."/>
            <person name="Hegarty R."/>
            <person name="Honan T."/>
            <person name="Horn A."/>
            <person name="Houde N."/>
            <person name="Hughes L."/>
            <person name="Hunnicutt L."/>
            <person name="Husby M."/>
            <person name="Jester B."/>
            <person name="Jones C."/>
            <person name="Kamat A."/>
            <person name="Kanga B."/>
            <person name="Kells C."/>
            <person name="Khazanovich D."/>
            <person name="Kieu A.C."/>
            <person name="Kisner P."/>
            <person name="Kumar M."/>
            <person name="Lance K."/>
            <person name="Landers T."/>
            <person name="Lara M."/>
            <person name="Lee W."/>
            <person name="Leger J.-P."/>
            <person name="Lennon N."/>
            <person name="Leuper L."/>
            <person name="LeVine S."/>
            <person name="Liu J."/>
            <person name="Liu X."/>
            <person name="Lokyitsang Y."/>
            <person name="Lokyitsang T."/>
            <person name="Lui A."/>
            <person name="Macdonald J."/>
            <person name="Major J."/>
            <person name="Marabella R."/>
            <person name="Maru K."/>
            <person name="Matthews C."/>
            <person name="McDonough S."/>
            <person name="Mehta T."/>
            <person name="Meldrim J."/>
            <person name="Melnikov A."/>
            <person name="Meneus L."/>
            <person name="Mihalev A."/>
            <person name="Mihova T."/>
            <person name="Miller K."/>
            <person name="Mittelman R."/>
            <person name="Mlenga V."/>
            <person name="Mulrain L."/>
            <person name="Munson G."/>
            <person name="Navidi A."/>
            <person name="Naylor J."/>
            <person name="Nguyen T."/>
            <person name="Nguyen N."/>
            <person name="Nguyen C."/>
            <person name="Nguyen T."/>
            <person name="Nicol R."/>
            <person name="Norbu N."/>
            <person name="Norbu C."/>
            <person name="Novod N."/>
            <person name="Nyima T."/>
            <person name="Olandt P."/>
            <person name="O'Neill B."/>
            <person name="O'Neill K."/>
            <person name="Osman S."/>
            <person name="Oyono L."/>
            <person name="Patti C."/>
            <person name="Perrin D."/>
            <person name="Phunkhang P."/>
            <person name="Pierre F."/>
            <person name="Priest M."/>
            <person name="Rachupka A."/>
            <person name="Raghuraman S."/>
            <person name="Rameau R."/>
            <person name="Ray V."/>
            <person name="Raymond C."/>
            <person name="Rege F."/>
            <person name="Rise C."/>
            <person name="Rogers J."/>
            <person name="Rogov P."/>
            <person name="Sahalie J."/>
            <person name="Settipalli S."/>
            <person name="Sharpe T."/>
            <person name="Shea T."/>
            <person name="Sheehan M."/>
            <person name="Sherpa N."/>
            <person name="Shi J."/>
            <person name="Shih D."/>
            <person name="Sloan J."/>
            <person name="Smith C."/>
            <person name="Sparrow T."/>
            <person name="Stalker J."/>
            <person name="Stange-Thomann N."/>
            <person name="Stavropoulos S."/>
            <person name="Stone C."/>
            <person name="Stone S."/>
            <person name="Sykes S."/>
            <person name="Tchuinga P."/>
            <person name="Tenzing P."/>
            <person name="Tesfaye S."/>
            <person name="Thoulutsang D."/>
            <person name="Thoulutsang Y."/>
            <person name="Topham K."/>
            <person name="Topping I."/>
            <person name="Tsamla T."/>
            <person name="Vassiliev H."/>
            <person name="Venkataraman V."/>
            <person name="Vo A."/>
            <person name="Wangchuk T."/>
            <person name="Wangdi T."/>
            <person name="Weiand M."/>
            <person name="Wilkinson J."/>
            <person name="Wilson A."/>
            <person name="Yadav S."/>
            <person name="Yang S."/>
            <person name="Yang X."/>
            <person name="Young G."/>
            <person name="Yu Q."/>
            <person name="Zainoun J."/>
            <person name="Zembek L."/>
            <person name="Zimmer A."/>
            <person name="Lander E.S."/>
        </authorList>
    </citation>
    <scope>NUCLEOTIDE SEQUENCE [LARGE SCALE GENOMIC DNA]</scope>
    <source>
        <strain evidence="7">Boxer</strain>
    </source>
</reference>
<reference key="2">
    <citation type="journal article" date="2016" name="Cell Rep.">
        <title>SHIP2 Regulates Lumen Generation, Cell Division, and Ciliogenesis through the Control of Basolateral to Apical Lumen Localization of Aurora A and HEF 1.</title>
        <authorList>
            <person name="Hamze-Komaiha O."/>
            <person name="Sarr S."/>
            <person name="Arlot-Bonnemains Y."/>
            <person name="Samuel D."/>
            <person name="Gassama-Diagne A."/>
        </authorList>
    </citation>
    <scope>FUNCTION</scope>
    <scope>SUBCELLULAR LOCATION</scope>
    <scope>PHOSPHORYLATION AT THR-288</scope>
</reference>
<evidence type="ECO:0000250" key="1">
    <source>
        <dbReference type="UniProtKB" id="O14965"/>
    </source>
</evidence>
<evidence type="ECO:0000250" key="2">
    <source>
        <dbReference type="UniProtKB" id="P59241"/>
    </source>
</evidence>
<evidence type="ECO:0000250" key="3">
    <source>
        <dbReference type="UniProtKB" id="P97477"/>
    </source>
</evidence>
<evidence type="ECO:0000255" key="4">
    <source>
        <dbReference type="PROSITE-ProRule" id="PRU00159"/>
    </source>
</evidence>
<evidence type="ECO:0000256" key="5">
    <source>
        <dbReference type="SAM" id="MobiDB-lite"/>
    </source>
</evidence>
<evidence type="ECO:0000269" key="6">
    <source>
    </source>
</evidence>
<evidence type="ECO:0000312" key="7">
    <source>
        <dbReference type="Proteomes" id="UP000002254"/>
    </source>
</evidence>
<name>AURKA_CANLF</name>
<feature type="chain" id="PRO_0000456647" description="Aurora kinase A">
    <location>
        <begin position="1"/>
        <end position="405"/>
    </location>
</feature>
<feature type="domain" description="Protein kinase" evidence="4">
    <location>
        <begin position="134"/>
        <end position="384"/>
    </location>
</feature>
<feature type="region of interest" description="Disordered" evidence="5">
    <location>
        <begin position="32"/>
        <end position="127"/>
    </location>
</feature>
<feature type="region of interest" description="Activation segment" evidence="1">
    <location>
        <begin position="281"/>
        <end position="294"/>
    </location>
</feature>
<feature type="region of interest" description="Disordered" evidence="5">
    <location>
        <begin position="385"/>
        <end position="405"/>
    </location>
</feature>
<feature type="compositionally biased region" description="Polar residues" evidence="5">
    <location>
        <begin position="32"/>
        <end position="82"/>
    </location>
</feature>
<feature type="compositionally biased region" description="Polar residues" evidence="5">
    <location>
        <begin position="91"/>
        <end position="110"/>
    </location>
</feature>
<feature type="compositionally biased region" description="Basic and acidic residues" evidence="5">
    <location>
        <begin position="111"/>
        <end position="127"/>
    </location>
</feature>
<feature type="compositionally biased region" description="Basic and acidic residues" evidence="5">
    <location>
        <begin position="396"/>
        <end position="405"/>
    </location>
</feature>
<feature type="active site" description="Proton acceptor" evidence="4">
    <location>
        <position position="257"/>
    </location>
</feature>
<feature type="binding site" evidence="1">
    <location>
        <position position="144"/>
    </location>
    <ligand>
        <name>ATP</name>
        <dbReference type="ChEBI" id="CHEBI:30616"/>
    </ligand>
</feature>
<feature type="binding site" evidence="1">
    <location>
        <position position="163"/>
    </location>
    <ligand>
        <name>ATP</name>
        <dbReference type="ChEBI" id="CHEBI:30616"/>
    </ligand>
</feature>
<feature type="binding site" evidence="1">
    <location>
        <begin position="212"/>
        <end position="214"/>
    </location>
    <ligand>
        <name>ATP</name>
        <dbReference type="ChEBI" id="CHEBI:30616"/>
    </ligand>
</feature>
<feature type="binding site" evidence="1">
    <location>
        <begin position="261"/>
        <end position="262"/>
    </location>
    <ligand>
        <name>ATP</name>
        <dbReference type="ChEBI" id="CHEBI:30616"/>
    </ligand>
</feature>
<feature type="binding site" evidence="1">
    <location>
        <position position="275"/>
    </location>
    <ligand>
        <name>ATP</name>
        <dbReference type="ChEBI" id="CHEBI:30616"/>
    </ligand>
</feature>
<feature type="modified residue" description="Phosphoserine" evidence="1">
    <location>
        <position position="42"/>
    </location>
</feature>
<feature type="modified residue" description="Phosphoserine" evidence="1">
    <location>
        <position position="52"/>
    </location>
</feature>
<feature type="modified residue" description="Phosphothreonine" evidence="6">
    <location>
        <position position="288"/>
    </location>
</feature>
<feature type="modified residue" description="Phosphothreonine" evidence="1">
    <location>
        <position position="289"/>
    </location>
</feature>
<feature type="modified residue" description="Phosphoserine" evidence="1">
    <location>
        <position position="343"/>
    </location>
</feature>
<feature type="cross-link" description="Glycyl lysine isopeptide (Lys-Gly) (interchain with G-Cter in SUMO2)" evidence="1">
    <location>
        <position position="259"/>
    </location>
</feature>
<dbReference type="EC" id="2.7.11.1" evidence="1"/>
<dbReference type="RefSeq" id="XP_038290065.1">
    <property type="nucleotide sequence ID" value="XM_038434137.1"/>
</dbReference>
<dbReference type="RefSeq" id="XP_038290066.1">
    <property type="nucleotide sequence ID" value="XM_038434138.1"/>
</dbReference>
<dbReference type="SMR" id="A0A8I3S724"/>
<dbReference type="FunCoup" id="A0A8I3S724">
    <property type="interactions" value="1173"/>
</dbReference>
<dbReference type="iPTMnet" id="A0A8I3S724"/>
<dbReference type="Ensembl" id="ENSCAFT00030046613.1">
    <property type="protein sequence ID" value="ENSCAFP00030040741.1"/>
    <property type="gene ID" value="ENSCAFG00030025248.1"/>
</dbReference>
<dbReference type="Ensembl" id="ENSCAFT00845051705.1">
    <property type="protein sequence ID" value="ENSCAFP00845040568.1"/>
    <property type="gene ID" value="ENSCAFG00845029207.1"/>
</dbReference>
<dbReference type="GeneID" id="485940"/>
<dbReference type="GeneTree" id="ENSGT00940000154900"/>
<dbReference type="OrthoDB" id="377346at2759"/>
<dbReference type="Reactome" id="R-CFA-174178">
    <property type="pathway name" value="APC/C:Cdh1 mediated degradation of Cdc20 and other APC/C:Cdh1 targeted proteins in late mitosis/early G1"/>
</dbReference>
<dbReference type="Reactome" id="R-CFA-2565942">
    <property type="pathway name" value="Regulation of PLK1 Activity at G2/M Transition"/>
</dbReference>
<dbReference type="Reactome" id="R-CFA-6804114">
    <property type="pathway name" value="TP53 Regulates Transcription of Genes Involved in G2 Cell Cycle Arrest"/>
</dbReference>
<dbReference type="Reactome" id="R-CFA-6804756">
    <property type="pathway name" value="Regulation of TP53 Activity through Phosphorylation"/>
</dbReference>
<dbReference type="Reactome" id="R-CFA-8854050">
    <property type="pathway name" value="FBXL7 down-regulates AURKA during mitotic entry and in early mitosis"/>
</dbReference>
<dbReference type="Reactome" id="R-CFA-8854518">
    <property type="pathway name" value="AURKA Activation by TPX2"/>
</dbReference>
<dbReference type="Reactome" id="R-CFA-8854521">
    <property type="pathway name" value="Interaction between PHLDA1 and AURKA"/>
</dbReference>
<dbReference type="Proteomes" id="UP000002254">
    <property type="component" value="Unplaced"/>
</dbReference>
<dbReference type="Proteomes" id="UP000694429">
    <property type="component" value="Chromosome 24"/>
</dbReference>
<dbReference type="Proteomes" id="UP000694542">
    <property type="component" value="Unplaced"/>
</dbReference>
<dbReference type="Proteomes" id="UP000805418">
    <property type="component" value="Chromosome 24"/>
</dbReference>
<dbReference type="GO" id="GO:0016323">
    <property type="term" value="C:basolateral plasma membrane"/>
    <property type="evidence" value="ECO:0000314"/>
    <property type="project" value="UniProtKB"/>
</dbReference>
<dbReference type="GO" id="GO:0005814">
    <property type="term" value="C:centriole"/>
    <property type="evidence" value="ECO:0007669"/>
    <property type="project" value="UniProtKB-SubCell"/>
</dbReference>
<dbReference type="GO" id="GO:0005813">
    <property type="term" value="C:centrosome"/>
    <property type="evidence" value="ECO:0000318"/>
    <property type="project" value="GO_Central"/>
</dbReference>
<dbReference type="GO" id="GO:0032133">
    <property type="term" value="C:chromosome passenger complex"/>
    <property type="evidence" value="ECO:0000318"/>
    <property type="project" value="GO_Central"/>
</dbReference>
<dbReference type="GO" id="GO:0005929">
    <property type="term" value="C:cilium"/>
    <property type="evidence" value="ECO:0007669"/>
    <property type="project" value="UniProtKB-SubCell"/>
</dbReference>
<dbReference type="GO" id="GO:0005737">
    <property type="term" value="C:cytoplasm"/>
    <property type="evidence" value="ECO:0007669"/>
    <property type="project" value="UniProtKB-KW"/>
</dbReference>
<dbReference type="GO" id="GO:0000776">
    <property type="term" value="C:kinetochore"/>
    <property type="evidence" value="ECO:0000318"/>
    <property type="project" value="GO_Central"/>
</dbReference>
<dbReference type="GO" id="GO:0043005">
    <property type="term" value="C:neuron projection"/>
    <property type="evidence" value="ECO:0007669"/>
    <property type="project" value="UniProtKB-SubCell"/>
</dbReference>
<dbReference type="GO" id="GO:0005634">
    <property type="term" value="C:nucleus"/>
    <property type="evidence" value="ECO:0000318"/>
    <property type="project" value="GO_Central"/>
</dbReference>
<dbReference type="GO" id="GO:0005876">
    <property type="term" value="C:spindle microtubule"/>
    <property type="evidence" value="ECO:0000318"/>
    <property type="project" value="GO_Central"/>
</dbReference>
<dbReference type="GO" id="GO:0051233">
    <property type="term" value="C:spindle midzone"/>
    <property type="evidence" value="ECO:0000318"/>
    <property type="project" value="GO_Central"/>
</dbReference>
<dbReference type="GO" id="GO:0000922">
    <property type="term" value="C:spindle pole"/>
    <property type="evidence" value="ECO:0000314"/>
    <property type="project" value="UniProtKB"/>
</dbReference>
<dbReference type="GO" id="GO:0005524">
    <property type="term" value="F:ATP binding"/>
    <property type="evidence" value="ECO:0007669"/>
    <property type="project" value="UniProtKB-KW"/>
</dbReference>
<dbReference type="GO" id="GO:0004674">
    <property type="term" value="F:protein serine/threonine kinase activity"/>
    <property type="evidence" value="ECO:0007669"/>
    <property type="project" value="UniProtKB-KW"/>
</dbReference>
<dbReference type="GO" id="GO:0051301">
    <property type="term" value="P:cell division"/>
    <property type="evidence" value="ECO:0007669"/>
    <property type="project" value="UniProtKB-KW"/>
</dbReference>
<dbReference type="GO" id="GO:0000212">
    <property type="term" value="P:meiotic spindle organization"/>
    <property type="evidence" value="ECO:0007669"/>
    <property type="project" value="InterPro"/>
</dbReference>
<dbReference type="GO" id="GO:0007100">
    <property type="term" value="P:mitotic centrosome separation"/>
    <property type="evidence" value="ECO:0007669"/>
    <property type="project" value="InterPro"/>
</dbReference>
<dbReference type="GO" id="GO:0007052">
    <property type="term" value="P:mitotic spindle organization"/>
    <property type="evidence" value="ECO:0000318"/>
    <property type="project" value="GO_Central"/>
</dbReference>
<dbReference type="GO" id="GO:0045931">
    <property type="term" value="P:positive regulation of mitotic cell cycle"/>
    <property type="evidence" value="ECO:0000315"/>
    <property type="project" value="UniProtKB"/>
</dbReference>
<dbReference type="GO" id="GO:0032465">
    <property type="term" value="P:regulation of cytokinesis"/>
    <property type="evidence" value="ECO:0000318"/>
    <property type="project" value="GO_Central"/>
</dbReference>
<dbReference type="CDD" id="cd14116">
    <property type="entry name" value="STKc_Aurora-A"/>
    <property type="match status" value="1"/>
</dbReference>
<dbReference type="FunFam" id="3.30.200.20:FF:000042">
    <property type="entry name" value="Aurora kinase A"/>
    <property type="match status" value="1"/>
</dbReference>
<dbReference type="FunFam" id="1.10.510.10:FF:000235">
    <property type="entry name" value="Serine/threonine-protein kinase ark1"/>
    <property type="match status" value="1"/>
</dbReference>
<dbReference type="Gene3D" id="3.30.200.20">
    <property type="entry name" value="Phosphorylase Kinase, domain 1"/>
    <property type="match status" value="1"/>
</dbReference>
<dbReference type="Gene3D" id="1.10.510.10">
    <property type="entry name" value="Transferase(Phosphotransferase) domain 1"/>
    <property type="match status" value="1"/>
</dbReference>
<dbReference type="InterPro" id="IPR030616">
    <property type="entry name" value="Aur-like"/>
</dbReference>
<dbReference type="InterPro" id="IPR030611">
    <property type="entry name" value="AURKA"/>
</dbReference>
<dbReference type="InterPro" id="IPR011009">
    <property type="entry name" value="Kinase-like_dom_sf"/>
</dbReference>
<dbReference type="InterPro" id="IPR000719">
    <property type="entry name" value="Prot_kinase_dom"/>
</dbReference>
<dbReference type="InterPro" id="IPR017441">
    <property type="entry name" value="Protein_kinase_ATP_BS"/>
</dbReference>
<dbReference type="InterPro" id="IPR008271">
    <property type="entry name" value="Ser/Thr_kinase_AS"/>
</dbReference>
<dbReference type="PANTHER" id="PTHR24350">
    <property type="entry name" value="SERINE/THREONINE-PROTEIN KINASE IAL-RELATED"/>
    <property type="match status" value="1"/>
</dbReference>
<dbReference type="Pfam" id="PF00069">
    <property type="entry name" value="Pkinase"/>
    <property type="match status" value="1"/>
</dbReference>
<dbReference type="SMART" id="SM00220">
    <property type="entry name" value="S_TKc"/>
    <property type="match status" value="1"/>
</dbReference>
<dbReference type="SUPFAM" id="SSF56112">
    <property type="entry name" value="Protein kinase-like (PK-like)"/>
    <property type="match status" value="1"/>
</dbReference>
<dbReference type="PROSITE" id="PS00107">
    <property type="entry name" value="PROTEIN_KINASE_ATP"/>
    <property type="match status" value="1"/>
</dbReference>
<dbReference type="PROSITE" id="PS50011">
    <property type="entry name" value="PROTEIN_KINASE_DOM"/>
    <property type="match status" value="1"/>
</dbReference>
<dbReference type="PROSITE" id="PS00108">
    <property type="entry name" value="PROTEIN_KINASE_ST"/>
    <property type="match status" value="1"/>
</dbReference>
<comment type="function">
    <text evidence="1 6">Mitotic serine/threonine kinase that contributes to the regulation of cell cycle progression (By similarity). Associates with the centrosome and the spindle microtubules during mitosis and plays a critical role in various mitotic events including the establishment of mitotic spindle, centrosome duplication, centrosome separation as well as maturation, chromosomal alignment, spindle assembly checkpoint, and cytokinesis (PubMed:27926875). Required for normal spindle positioning during mitosis and for the localization of NUMA1 and DCTN1 to the cell cortex during metaphase (By similarity). Required for initial activation of CDK1 at centrosomes (By similarity). Phosphorylates numerous target proteins, including ARHGEF2, BORA, BRCA1, CDC25B, DLGP5, HDAC6, KIF2A, LATS2, NDEL1, PARD3, PPP1R2, PLK1, RASSF1, TACC3, p53/TP53 and TPX2 (By similarity). Phosphorylates MCRS1 which is required for MCRS1-mediated kinetochore fiber assembly and mitotic progression (By similarity). Regulates KIF2A tubulin depolymerase activity (By similarity). Important for microtubule formation and/or stabilization (By similarity). Required for normal axon formation (By similarity). Plays a role in microtubule remodeling during neurite extension (By similarity). Also acts as a key regulatory component of the p53/TP53 pathway, and particularly the checkpoint-response pathways critical for oncogenic transformation of cells, by phosphorylating and destabilizing p53/TP53 (By similarity). Phosphorylates its own inhibitors, the protein phosphatase type 1 (PP1) isoforms, to inhibit their activity (By similarity). Inhibits cilia outgrowth (PubMed:27926875). Required for cilia disassembly via phosphorylation of HDAC6 and subsequent deacetylation of alpha-tubulin (By similarity). Regulates protein levels of the anti-apoptosis protein BIRC5 by suppressing the expression of the SCF(FBXL7) E3 ubiquitin-protein ligase substrate adapter FBXL7 through the phosphorylation of the transcription factor FOXP1 (By similarity).</text>
</comment>
<comment type="catalytic activity">
    <reaction evidence="1">
        <text>L-seryl-[protein] + ATP = O-phospho-L-seryl-[protein] + ADP + H(+)</text>
        <dbReference type="Rhea" id="RHEA:17989"/>
        <dbReference type="Rhea" id="RHEA-COMP:9863"/>
        <dbReference type="Rhea" id="RHEA-COMP:11604"/>
        <dbReference type="ChEBI" id="CHEBI:15378"/>
        <dbReference type="ChEBI" id="CHEBI:29999"/>
        <dbReference type="ChEBI" id="CHEBI:30616"/>
        <dbReference type="ChEBI" id="CHEBI:83421"/>
        <dbReference type="ChEBI" id="CHEBI:456216"/>
        <dbReference type="EC" id="2.7.11.1"/>
    </reaction>
</comment>
<comment type="catalytic activity">
    <reaction evidence="1">
        <text>L-threonyl-[protein] + ATP = O-phospho-L-threonyl-[protein] + ADP + H(+)</text>
        <dbReference type="Rhea" id="RHEA:46608"/>
        <dbReference type="Rhea" id="RHEA-COMP:11060"/>
        <dbReference type="Rhea" id="RHEA-COMP:11605"/>
        <dbReference type="ChEBI" id="CHEBI:15378"/>
        <dbReference type="ChEBI" id="CHEBI:30013"/>
        <dbReference type="ChEBI" id="CHEBI:30616"/>
        <dbReference type="ChEBI" id="CHEBI:61977"/>
        <dbReference type="ChEBI" id="CHEBI:456216"/>
        <dbReference type="EC" id="2.7.11.1"/>
    </reaction>
</comment>
<comment type="activity regulation">
    <text evidence="1">Activation of CDK1, appears to be an upstream event of AURKA activation. Phosphatase inhibitor-2 (PPP1R2) and TPX2 act also as activators. Inactivated by the G2 checkpoint. Inhibited by GADD45A and p53/TP53, and through dephosphorylation by protein phosphatase type 1 (PP1). MLN8054 is also a potent and selective inhibitor. Activated during the early phase of cilia disassembly in the presence of CIMAP3. Inhibited by the small molecule inhibitor VX-680.</text>
</comment>
<comment type="subunit">
    <text evidence="1 3">Part of a complex composed of NEDD9, AURKA and CTTN; within the complex NEDD9 acts as a scaffold protein and is required for complex formation (By similarity). Identified in a complex with AUNIP and NIN (By similarity). Interacts with FBXL7 (By similarity). Interacts with CPEB1, JTB, TACC1, TPX2, PPP2CA, as well as with the protein phosphatase type 1 (PP1) isoforms PPP1CA, PPP1CB and PPP1CC (By similarity). Also interacts with its substrates ARHGEF2, BORA, KIF2A, PARD3, and p53/TP53 (By similarity). Interaction with BORA promotes phosphorylation of PLK1 (By similarity). Interacts with CIMAP3 (By similarity). Interacts with GADD45A, competing with its oligomerization (By similarity). Interacts (via C-terminus) with AUNIP (via C-terminus) (By similarity). Interacts with FRY; this interaction facilitates AURKA-mediated PLK1 phosphorylation (By similarity). Interacts with SIRT2 (By similarity). Interacts with MYCN; interaction is phospho-independent and triggers AURKA activation; AURKA competes with FBXW7 for binding to unphosphorylated MYCN but not for binding to phosphorylated MYCN (By similarity). Interacts with HNRNPU (By similarity). Interacts with AAAS (By similarity). Interacts with KLHL18 and CUL3 (By similarity). Interacts with FOXP1 (By similarity). Interacts with HDAC6; AURKA-mediated phosphorylation of HDAC6 promotes deacetylation of alpha-tubulin (By similarity).</text>
</comment>
<comment type="subcellular location">
    <subcellularLocation>
        <location evidence="1">Cytoplasm</location>
        <location evidence="1">Cytoskeleton</location>
        <location evidence="1">Microtubule organizing center</location>
        <location evidence="1">Centrosome</location>
    </subcellularLocation>
    <subcellularLocation>
        <location evidence="6">Cytoplasm</location>
        <location evidence="6">Cytoskeleton</location>
        <location evidence="6">Spindle pole</location>
    </subcellularLocation>
    <subcellularLocation>
        <location evidence="3">Cytoplasm</location>
        <location evidence="3">Cytoskeleton</location>
        <location evidence="3">Microtubule organizing center</location>
        <location evidence="3">Centrosome</location>
        <location evidence="3">Centriole</location>
    </subcellularLocation>
    <subcellularLocation>
        <location evidence="3">Cell projection</location>
        <location evidence="3">Neuron projection</location>
    </subcellularLocation>
    <subcellularLocation>
        <location evidence="1">Cell projection</location>
        <location evidence="1">Cilium</location>
    </subcellularLocation>
    <subcellularLocation>
        <location evidence="3">Cytoplasm</location>
        <location evidence="3">Cytoskeleton</location>
        <location evidence="3">Cilium basal body</location>
    </subcellularLocation>
    <subcellularLocation>
        <location evidence="6">Basolateral cell membrane</location>
    </subcellularLocation>
    <text evidence="1">Detected at the neurite hillock in developing neurons (By similarity). Localizes at the centrosome in mitotic cells from early prophase until telophase, but also localizes to the spindle pole MTs from prophase to anaphase (By similarity). Moves to the midbody during both telophase and cytokinesis (By similarity). Associates with both the pericentriolar material (PCM) and centrioles (By similarity). Colocalized with SIRT2 at centrosome. The localization to the spindle poles is regulated by AAAS (By similarity).</text>
</comment>
<comment type="PTM">
    <text evidence="1">Activated by phosphorylation at Thr-289; this brings about a change in the conformation of the activation segment (By similarity). Phosphorylation at Thr-289 varies during the cell cycle and is highest during M phase (By similarity). Autophosphorylated at Thr-289 upon TPX2 binding (By similarity). Thr-289 can be phosphorylated by several kinases, including PAK and PKA. Protein phosphatase type 1 (PP1) binds AURKA and inhibits its activity by dephosphorylating Thr-289 during mitosis (By similarity). Phosphorylation at Ser-343 decreases the kinase activity (By similarity). PPP2CA controls degradation by dephosphorylating Ser-52 at the end of mitosis (By similarity).</text>
</comment>
<comment type="PTM">
    <text evidence="1 3">Ubiquitinated by the E3 ubiquitin-protein ligase complex SCF(FBXL7) during mitosis, leading to its degradation by the proteasome (By similarity). Ubiquitinated by CHFR, leading to its degradation by the proteasome (By similarity). Ubiquitinated by the anaphase-promoting complex (APC), leading to its degradation by the proteasome (By similarity). Ubiquitinated by the CUL3-KLHL18 ligase leading to its activation at the centrosome which is required for initiating mitotic entry (By similarity). Ubiquitination mediated by CUL3-KLHL18 ligase does not lead to its degradation by the proteasome (By similarity).</text>
</comment>
<comment type="similarity">
    <text evidence="4">Belongs to the protein kinase superfamily. Ser/Thr protein kinase family. Aurora subfamily.</text>
</comment>
<sequence length="405" mass="45598">MDKSKENCIAGPVKTAIALGDGPKRVLVTQQVPSQNPLSANSGQAQRVLCPSNSSQRVPPQTQKLVSSHKPAQNLKQKQLQATGVPRPASRSLNNTQKSEQPSSSAPGNNSEKELATKQKNEESKKRQWALEDFEIGRPLGKGKFGNVYLAREKQSKFILAIKVLFKAQLEKAGVEHQLRREVEIQSHLRHPNILRLYGYFHDATRVYLILEYAPLGAVYRELQKLSKFDEQRTATYITELADALSYCHSKRVIHRDIKPENLLLGSAGELKIADFGWSVHAPSSRRTTLCGTLDYLPPEMIEGRMHDEKVDLWSLGVLCYEFLVGKPPFEASTYQETYKRISRVEFTFPDFVPEGARDLISRLLKHNPSQRPTLKDVLEHPWIMANSSKPSSSQKSKDSTSKQS</sequence>
<protein>
    <recommendedName>
        <fullName evidence="1">Aurora kinase A</fullName>
        <ecNumber evidence="1">2.7.11.1</ecNumber>
    </recommendedName>
    <alternativeName>
        <fullName evidence="1">Aurora 2</fullName>
    </alternativeName>
    <alternativeName>
        <fullName evidence="1">Aurora/IPL1-related kinase 1</fullName>
        <shortName evidence="1">ARK-1</shortName>
        <shortName evidence="1">Aurora-related kinase 1</shortName>
    </alternativeName>
    <alternativeName>
        <fullName evidence="3">Ipl1- and aurora-related kinase 1</fullName>
    </alternativeName>
    <alternativeName>
        <fullName evidence="1">Serine/threonine-protein kinase 15</fullName>
    </alternativeName>
    <alternativeName>
        <fullName evidence="1">Serine/threonine-protein kinase 6</fullName>
    </alternativeName>
    <alternativeName>
        <fullName evidence="3">Serine/threonine-protein kinase Ayk1</fullName>
    </alternativeName>
    <alternativeName>
        <fullName evidence="2">Serine/threonine-protein kinase aurora-A</fullName>
    </alternativeName>
</protein>
<accession>A0A8I3S724</accession>
<accession>A0A8C0RTC6</accession>
<accession>A0A8C0YY51</accession>
<accession>A0A8I3Q7K5</accession>
<keyword id="KW-0067">ATP-binding</keyword>
<keyword id="KW-0131">Cell cycle</keyword>
<keyword id="KW-0132">Cell division</keyword>
<keyword id="KW-1003">Cell membrane</keyword>
<keyword id="KW-0966">Cell projection</keyword>
<keyword id="KW-0963">Cytoplasm</keyword>
<keyword id="KW-0206">Cytoskeleton</keyword>
<keyword id="KW-1017">Isopeptide bond</keyword>
<keyword id="KW-0418">Kinase</keyword>
<keyword id="KW-0472">Membrane</keyword>
<keyword id="KW-0493">Microtubule</keyword>
<keyword id="KW-0498">Mitosis</keyword>
<keyword id="KW-0547">Nucleotide-binding</keyword>
<keyword id="KW-0597">Phosphoprotein</keyword>
<keyword id="KW-1185">Reference proteome</keyword>
<keyword id="KW-0723">Serine/threonine-protein kinase</keyword>
<keyword id="KW-0808">Transferase</keyword>
<keyword id="KW-0832">Ubl conjugation</keyword>
<organism evidence="7">
    <name type="scientific">Canis lupus familiaris</name>
    <name type="common">Dog</name>
    <name type="synonym">Canis familiaris</name>
    <dbReference type="NCBI Taxonomy" id="9615"/>
    <lineage>
        <taxon>Eukaryota</taxon>
        <taxon>Metazoa</taxon>
        <taxon>Chordata</taxon>
        <taxon>Craniata</taxon>
        <taxon>Vertebrata</taxon>
        <taxon>Euteleostomi</taxon>
        <taxon>Mammalia</taxon>
        <taxon>Eutheria</taxon>
        <taxon>Laurasiatheria</taxon>
        <taxon>Carnivora</taxon>
        <taxon>Caniformia</taxon>
        <taxon>Canidae</taxon>
        <taxon>Canis</taxon>
    </lineage>
</organism>
<gene>
    <name evidence="1" type="primary">AURKA</name>
    <name evidence="1" type="synonym">AIK</name>
    <name evidence="1" type="synonym">AIRK1</name>
    <name evidence="1" type="synonym">ARK1</name>
    <name evidence="1" type="synonym">AURA</name>
    <name evidence="3" type="synonym">AYK1</name>
    <name evidence="1" type="synonym">BTAK</name>
    <name evidence="3" type="synonym">IAK1</name>
    <name evidence="1" type="synonym">STK15</name>
    <name evidence="1" type="synonym">STK6</name>
</gene>
<proteinExistence type="evidence at protein level"/>